<keyword id="KW-0067">ATP-binding</keyword>
<keyword id="KW-0472">Membrane</keyword>
<keyword id="KW-0547">Nucleotide-binding</keyword>
<keyword id="KW-1185">Reference proteome</keyword>
<keyword id="KW-0677">Repeat</keyword>
<keyword id="KW-0812">Transmembrane</keyword>
<keyword id="KW-1133">Transmembrane helix</keyword>
<keyword id="KW-0813">Transport</keyword>
<comment type="subcellular location">
    <subcellularLocation>
        <location evidence="2">Membrane</location>
        <topology evidence="2">Multi-pass membrane protein</topology>
    </subcellularLocation>
</comment>
<comment type="similarity">
    <text evidence="4">Belongs to the ABC transporter superfamily. ABCC family. Conjugate transporter (TC 3.A.1.208) subfamily.</text>
</comment>
<comment type="sequence caution" evidence="4">
    <conflict type="erroneous initiation">
        <sequence resource="EMBL-CDS" id="AAL85710"/>
    </conflict>
</comment>
<feature type="chain" id="PRO_0000363852" description="ABC transporter C family member 7">
    <location>
        <begin position="1"/>
        <end position="1328"/>
    </location>
</feature>
<feature type="transmembrane region" description="Helical" evidence="2">
    <location>
        <begin position="112"/>
        <end position="132"/>
    </location>
</feature>
<feature type="transmembrane region" description="Helical" evidence="2">
    <location>
        <begin position="140"/>
        <end position="160"/>
    </location>
</feature>
<feature type="transmembrane region" description="Helical" evidence="2">
    <location>
        <begin position="224"/>
        <end position="244"/>
    </location>
</feature>
<feature type="transmembrane region" description="Helical" evidence="2">
    <location>
        <begin position="245"/>
        <end position="265"/>
    </location>
</feature>
<feature type="transmembrane region" description="Helical" evidence="2">
    <location>
        <begin position="287"/>
        <end position="307"/>
    </location>
</feature>
<feature type="transmembrane region" description="Helical" evidence="2">
    <location>
        <begin position="333"/>
        <end position="353"/>
    </location>
</feature>
<feature type="transmembrane region" description="Helical" evidence="2">
    <location>
        <begin position="762"/>
        <end position="782"/>
    </location>
</feature>
<feature type="transmembrane region" description="Helical" evidence="2">
    <location>
        <begin position="802"/>
        <end position="822"/>
    </location>
</feature>
<feature type="transmembrane region" description="Helical" evidence="2">
    <location>
        <begin position="894"/>
        <end position="914"/>
    </location>
</feature>
<feature type="transmembrane region" description="Helical" evidence="2">
    <location>
        <begin position="988"/>
        <end position="1008"/>
    </location>
</feature>
<feature type="transmembrane region" description="Helical" evidence="2">
    <location>
        <begin position="1014"/>
        <end position="1034"/>
    </location>
</feature>
<feature type="domain" description="ABC transmembrane type-1 1" evidence="2">
    <location>
        <begin position="104"/>
        <end position="389"/>
    </location>
</feature>
<feature type="domain" description="ABC transporter 1" evidence="1">
    <location>
        <begin position="457"/>
        <end position="678"/>
    </location>
</feature>
<feature type="domain" description="ABC transmembrane type-1 2" evidence="2">
    <location>
        <begin position="765"/>
        <end position="1046"/>
    </location>
</feature>
<feature type="domain" description="ABC transporter 2" evidence="1">
    <location>
        <begin position="1083"/>
        <end position="1316"/>
    </location>
</feature>
<feature type="region of interest" description="Disordered" evidence="3">
    <location>
        <begin position="684"/>
        <end position="708"/>
    </location>
</feature>
<feature type="compositionally biased region" description="Low complexity" evidence="3">
    <location>
        <begin position="684"/>
        <end position="695"/>
    </location>
</feature>
<feature type="binding site" evidence="1">
    <location>
        <begin position="490"/>
        <end position="497"/>
    </location>
    <ligand>
        <name>ATP</name>
        <dbReference type="ChEBI" id="CHEBI:30616"/>
    </ligand>
</feature>
<feature type="binding site" evidence="1">
    <location>
        <begin position="1117"/>
        <end position="1124"/>
    </location>
    <ligand>
        <name>ATP</name>
        <dbReference type="ChEBI" id="CHEBI:30616"/>
    </ligand>
</feature>
<organism>
    <name type="scientific">Dictyostelium discoideum</name>
    <name type="common">Social amoeba</name>
    <dbReference type="NCBI Taxonomy" id="44689"/>
    <lineage>
        <taxon>Eukaryota</taxon>
        <taxon>Amoebozoa</taxon>
        <taxon>Evosea</taxon>
        <taxon>Eumycetozoa</taxon>
        <taxon>Dictyostelia</taxon>
        <taxon>Dictyosteliales</taxon>
        <taxon>Dictyosteliaceae</taxon>
        <taxon>Dictyostelium</taxon>
    </lineage>
</organism>
<sequence>MKNKKKIKNKISYSLLERELMGSRENEIAPEDCASFLSRITYSWTQKMLIYGYFNTLQLKDVPDLPESIKVENTTPILDEFKFKKNEKFGLVWFIYKRFVMVRHKTSIIVQIFSAIVSVLSPLCLRAFILYVQREPSEKSFLVGLFYAVLVLMGALFLSISLQHTYWYTMKCGLEVKGALTSKIYSKTLKLSNYGKRLYSSGTILNLISSDCQNFADYFWIDYLILLVAPIQIIALLALLCWTIGYSGLVGFLIMILSLPLSTFLSSKVSKYQLLSLKYSDKRCNLISEMINGIYLLKLYNWELFFINRIEKQRKQQLINLYKRMAFWALDKMVVQISSALVLVSSFTVYTLIANKSITYEVAFTSISIFSNLREPCELLPQAIQRLLSLLPSSDRICKFLYETSEIIENLSTITTTNGTNQDILITNGTFDWNDNNKNINVGVDSQENKNDDDDMIELVNNDSIETTTSYVLDDINFIAPAGKLTIICGVVGSGKSSLINGLIGEIYKVSGQVTIPNTVSFTNQQPFLVNSTLRENILFGLPMDMDRYKKVLESCSLLTDLQSMPGKDLTEIGERGINLSGGQKQRINLARALYSNSDCYILDEPLSAVDPQVATHLFNHCIQGELMNNKTRILVTHQLQFIPSADHIVVLENGILTQGTYQELKDKFDFESIMKTKKLNLELNNSNNNNNNNNNKEEEEDVENLEKEQQQQVINVNDVISNEFESKNDELNSKLLVNEERETGSVELNIYKMYIKYGSSFIFFFTMIMMYIISQLLFLLFDYWLTIWSDEKKNKNGTKGDSFYILYYLLLVGLFSVFLGIRYFMILHFTNSSSKNLHDKLLKSIGYASCQFFDINSSGRINNRFTKDIAEVDLILMVLSDALYCGSTVLVAVLMMIVINPLIVFPFLLLALFYYLVQKLYRSSSLELKRLENISRSPIFSILSESFNGLITIRSFRQQSRFIKRMQDSINVNLRLFYYNFSAHRWIGIKIEIISSAAVFLSAFFSLFNSNTGLSVLAVTTSLSLTGYLNWCIRQYIEFSMKMSSVERIENYINQPREGDTMNVDMELESNLPINWPQKGEIQFKNVEIKYRPNLKPSLKNISFDIKSNEKIGIVGKSGSGKSTTMLALFRMIECSKGSIHIDGIDISKISLSKLRNSIGICPQEPFIFSGTIRKNIDPFGIYSDSEIWLALEKVKLKETISLLPMKIDTIIHEQANLSFGQKQLLCLTRVLLKSPKLVFFDEHSSSIDYFTAHQLNISVKENITNSTTLTIAHRIDTIIDSDRILVIDSGELIEIFDKNNINNNINNQNSKFKKFVQHTSDHFKNY</sequence>
<protein>
    <recommendedName>
        <fullName>ABC transporter C family member 7</fullName>
    </recommendedName>
    <alternativeName>
        <fullName>ABC transporter ABCC.7</fullName>
    </alternativeName>
</protein>
<proteinExistence type="inferred from homology"/>
<dbReference type="EMBL" id="AAFI02000177">
    <property type="protein sequence ID" value="EAL61605.1"/>
    <property type="molecule type" value="Genomic_DNA"/>
</dbReference>
<dbReference type="EMBL" id="AF474339">
    <property type="protein sequence ID" value="AAL85710.1"/>
    <property type="status" value="ALT_INIT"/>
    <property type="molecule type" value="Genomic_DNA"/>
</dbReference>
<dbReference type="RefSeq" id="XP_635238.1">
    <property type="nucleotide sequence ID" value="XM_630146.1"/>
</dbReference>
<dbReference type="SMR" id="Q54EK2"/>
<dbReference type="FunCoup" id="Q54EK2">
    <property type="interactions" value="17"/>
</dbReference>
<dbReference type="STRING" id="44689.Q54EK2"/>
<dbReference type="PaxDb" id="44689-DDB0201630"/>
<dbReference type="EnsemblProtists" id="EAL61605">
    <property type="protein sequence ID" value="EAL61605"/>
    <property type="gene ID" value="DDB_G0291243"/>
</dbReference>
<dbReference type="GeneID" id="8628184"/>
<dbReference type="KEGG" id="ddi:DDB_G0291243"/>
<dbReference type="dictyBase" id="DDB_G0291243">
    <property type="gene designation" value="abcC7"/>
</dbReference>
<dbReference type="VEuPathDB" id="AmoebaDB:DDB_G0291243"/>
<dbReference type="eggNOG" id="KOG0054">
    <property type="taxonomic scope" value="Eukaryota"/>
</dbReference>
<dbReference type="HOGENOM" id="CLU_000604_27_3_1"/>
<dbReference type="InParanoid" id="Q54EK2"/>
<dbReference type="OMA" id="INIPREG"/>
<dbReference type="PhylomeDB" id="Q54EK2"/>
<dbReference type="Reactome" id="R-DDI-114608">
    <property type="pathway name" value="Platelet degranulation"/>
</dbReference>
<dbReference type="Reactome" id="R-DDI-382556">
    <property type="pathway name" value="ABC-family proteins mediated transport"/>
</dbReference>
<dbReference type="Reactome" id="R-DDI-8856825">
    <property type="pathway name" value="Cargo recognition for clathrin-mediated endocytosis"/>
</dbReference>
<dbReference type="Reactome" id="R-DDI-8856828">
    <property type="pathway name" value="Clathrin-mediated endocytosis"/>
</dbReference>
<dbReference type="Reactome" id="R-DDI-9646399">
    <property type="pathway name" value="Aggrephagy"/>
</dbReference>
<dbReference type="Reactome" id="R-DDI-9748787">
    <property type="pathway name" value="Azathioprine ADME"/>
</dbReference>
<dbReference type="Reactome" id="R-DDI-9753281">
    <property type="pathway name" value="Paracetamol ADME"/>
</dbReference>
<dbReference type="PRO" id="PR:Q54EK2"/>
<dbReference type="Proteomes" id="UP000002195">
    <property type="component" value="Chromosome 6"/>
</dbReference>
<dbReference type="GO" id="GO:0016020">
    <property type="term" value="C:membrane"/>
    <property type="evidence" value="ECO:0000318"/>
    <property type="project" value="GO_Central"/>
</dbReference>
<dbReference type="GO" id="GO:0140359">
    <property type="term" value="F:ABC-type transporter activity"/>
    <property type="evidence" value="ECO:0007669"/>
    <property type="project" value="InterPro"/>
</dbReference>
<dbReference type="GO" id="GO:0005524">
    <property type="term" value="F:ATP binding"/>
    <property type="evidence" value="ECO:0007669"/>
    <property type="project" value="UniProtKB-KW"/>
</dbReference>
<dbReference type="GO" id="GO:0016887">
    <property type="term" value="F:ATP hydrolysis activity"/>
    <property type="evidence" value="ECO:0007669"/>
    <property type="project" value="InterPro"/>
</dbReference>
<dbReference type="GO" id="GO:0042626">
    <property type="term" value="F:ATPase-coupled transmembrane transporter activity"/>
    <property type="evidence" value="ECO:0000318"/>
    <property type="project" value="GO_Central"/>
</dbReference>
<dbReference type="GO" id="GO:0030587">
    <property type="term" value="P:sorocarp development"/>
    <property type="evidence" value="ECO:0007669"/>
    <property type="project" value="UniProtKB-ARBA"/>
</dbReference>
<dbReference type="GO" id="GO:0055085">
    <property type="term" value="P:transmembrane transport"/>
    <property type="evidence" value="ECO:0000318"/>
    <property type="project" value="GO_Central"/>
</dbReference>
<dbReference type="CDD" id="cd18579">
    <property type="entry name" value="ABC_6TM_ABCC_D1"/>
    <property type="match status" value="1"/>
</dbReference>
<dbReference type="CDD" id="cd18580">
    <property type="entry name" value="ABC_6TM_ABCC_D2"/>
    <property type="match status" value="1"/>
</dbReference>
<dbReference type="CDD" id="cd03250">
    <property type="entry name" value="ABCC_MRP_domain1"/>
    <property type="match status" value="1"/>
</dbReference>
<dbReference type="CDD" id="cd03244">
    <property type="entry name" value="ABCC_MRP_domain2"/>
    <property type="match status" value="1"/>
</dbReference>
<dbReference type="FunFam" id="1.20.1560.10:FF:000080">
    <property type="entry name" value="ABC transporter C family member 1"/>
    <property type="match status" value="1"/>
</dbReference>
<dbReference type="FunFam" id="3.40.50.300:FF:002822">
    <property type="entry name" value="ABC transporter C family member 7"/>
    <property type="match status" value="1"/>
</dbReference>
<dbReference type="FunFam" id="1.20.1560.10:FF:000010">
    <property type="entry name" value="Multidrug resistance-associated ABC transporter"/>
    <property type="match status" value="1"/>
</dbReference>
<dbReference type="FunFam" id="3.40.50.300:FF:000610">
    <property type="entry name" value="Multidrug resistance-associated ABC transporter"/>
    <property type="match status" value="1"/>
</dbReference>
<dbReference type="Gene3D" id="1.20.1560.10">
    <property type="entry name" value="ABC transporter type 1, transmembrane domain"/>
    <property type="match status" value="2"/>
</dbReference>
<dbReference type="Gene3D" id="3.40.50.300">
    <property type="entry name" value="P-loop containing nucleotide triphosphate hydrolases"/>
    <property type="match status" value="2"/>
</dbReference>
<dbReference type="InterPro" id="IPR003593">
    <property type="entry name" value="AAA+_ATPase"/>
</dbReference>
<dbReference type="InterPro" id="IPR011527">
    <property type="entry name" value="ABC1_TM_dom"/>
</dbReference>
<dbReference type="InterPro" id="IPR036640">
    <property type="entry name" value="ABC1_TM_sf"/>
</dbReference>
<dbReference type="InterPro" id="IPR003439">
    <property type="entry name" value="ABC_transporter-like_ATP-bd"/>
</dbReference>
<dbReference type="InterPro" id="IPR017871">
    <property type="entry name" value="ABC_transporter-like_CS"/>
</dbReference>
<dbReference type="InterPro" id="IPR050173">
    <property type="entry name" value="ABC_transporter_C-like"/>
</dbReference>
<dbReference type="InterPro" id="IPR044746">
    <property type="entry name" value="ABCC_6TM_D1"/>
</dbReference>
<dbReference type="InterPro" id="IPR044726">
    <property type="entry name" value="ABCC_6TM_D2"/>
</dbReference>
<dbReference type="InterPro" id="IPR027417">
    <property type="entry name" value="P-loop_NTPase"/>
</dbReference>
<dbReference type="PANTHER" id="PTHR24223:SF172">
    <property type="entry name" value="ABC TRANSPORTER C FAMILY MEMBER 1-RELATED"/>
    <property type="match status" value="1"/>
</dbReference>
<dbReference type="PANTHER" id="PTHR24223">
    <property type="entry name" value="ATP-BINDING CASSETTE SUB-FAMILY C"/>
    <property type="match status" value="1"/>
</dbReference>
<dbReference type="Pfam" id="PF00664">
    <property type="entry name" value="ABC_membrane"/>
    <property type="match status" value="2"/>
</dbReference>
<dbReference type="Pfam" id="PF00005">
    <property type="entry name" value="ABC_tran"/>
    <property type="match status" value="2"/>
</dbReference>
<dbReference type="SMART" id="SM00382">
    <property type="entry name" value="AAA"/>
    <property type="match status" value="2"/>
</dbReference>
<dbReference type="SUPFAM" id="SSF90123">
    <property type="entry name" value="ABC transporter transmembrane region"/>
    <property type="match status" value="2"/>
</dbReference>
<dbReference type="SUPFAM" id="SSF52540">
    <property type="entry name" value="P-loop containing nucleoside triphosphate hydrolases"/>
    <property type="match status" value="2"/>
</dbReference>
<dbReference type="PROSITE" id="PS50929">
    <property type="entry name" value="ABC_TM1F"/>
    <property type="match status" value="2"/>
</dbReference>
<dbReference type="PROSITE" id="PS00211">
    <property type="entry name" value="ABC_TRANSPORTER_1"/>
    <property type="match status" value="1"/>
</dbReference>
<dbReference type="PROSITE" id="PS50893">
    <property type="entry name" value="ABC_TRANSPORTER_2"/>
    <property type="match status" value="2"/>
</dbReference>
<accession>Q54EK2</accession>
<accession>Q8T6H2</accession>
<evidence type="ECO:0000255" key="1">
    <source>
        <dbReference type="PROSITE-ProRule" id="PRU00434"/>
    </source>
</evidence>
<evidence type="ECO:0000255" key="2">
    <source>
        <dbReference type="PROSITE-ProRule" id="PRU00441"/>
    </source>
</evidence>
<evidence type="ECO:0000256" key="3">
    <source>
        <dbReference type="SAM" id="MobiDB-lite"/>
    </source>
</evidence>
<evidence type="ECO:0000305" key="4"/>
<reference key="1">
    <citation type="journal article" date="2005" name="Nature">
        <title>The genome of the social amoeba Dictyostelium discoideum.</title>
        <authorList>
            <person name="Eichinger L."/>
            <person name="Pachebat J.A."/>
            <person name="Gloeckner G."/>
            <person name="Rajandream M.A."/>
            <person name="Sucgang R."/>
            <person name="Berriman M."/>
            <person name="Song J."/>
            <person name="Olsen R."/>
            <person name="Szafranski K."/>
            <person name="Xu Q."/>
            <person name="Tunggal B."/>
            <person name="Kummerfeld S."/>
            <person name="Madera M."/>
            <person name="Konfortov B.A."/>
            <person name="Rivero F."/>
            <person name="Bankier A.T."/>
            <person name="Lehmann R."/>
            <person name="Hamlin N."/>
            <person name="Davies R."/>
            <person name="Gaudet P."/>
            <person name="Fey P."/>
            <person name="Pilcher K."/>
            <person name="Chen G."/>
            <person name="Saunders D."/>
            <person name="Sodergren E.J."/>
            <person name="Davis P."/>
            <person name="Kerhornou A."/>
            <person name="Nie X."/>
            <person name="Hall N."/>
            <person name="Anjard C."/>
            <person name="Hemphill L."/>
            <person name="Bason N."/>
            <person name="Farbrother P."/>
            <person name="Desany B."/>
            <person name="Just E."/>
            <person name="Morio T."/>
            <person name="Rost R."/>
            <person name="Churcher C.M."/>
            <person name="Cooper J."/>
            <person name="Haydock S."/>
            <person name="van Driessche N."/>
            <person name="Cronin A."/>
            <person name="Goodhead I."/>
            <person name="Muzny D.M."/>
            <person name="Mourier T."/>
            <person name="Pain A."/>
            <person name="Lu M."/>
            <person name="Harper D."/>
            <person name="Lindsay R."/>
            <person name="Hauser H."/>
            <person name="James K.D."/>
            <person name="Quiles M."/>
            <person name="Madan Babu M."/>
            <person name="Saito T."/>
            <person name="Buchrieser C."/>
            <person name="Wardroper A."/>
            <person name="Felder M."/>
            <person name="Thangavelu M."/>
            <person name="Johnson D."/>
            <person name="Knights A."/>
            <person name="Loulseged H."/>
            <person name="Mungall K.L."/>
            <person name="Oliver K."/>
            <person name="Price C."/>
            <person name="Quail M.A."/>
            <person name="Urushihara H."/>
            <person name="Hernandez J."/>
            <person name="Rabbinowitsch E."/>
            <person name="Steffen D."/>
            <person name="Sanders M."/>
            <person name="Ma J."/>
            <person name="Kohara Y."/>
            <person name="Sharp S."/>
            <person name="Simmonds M.N."/>
            <person name="Spiegler S."/>
            <person name="Tivey A."/>
            <person name="Sugano S."/>
            <person name="White B."/>
            <person name="Walker D."/>
            <person name="Woodward J.R."/>
            <person name="Winckler T."/>
            <person name="Tanaka Y."/>
            <person name="Shaulsky G."/>
            <person name="Schleicher M."/>
            <person name="Weinstock G.M."/>
            <person name="Rosenthal A."/>
            <person name="Cox E.C."/>
            <person name="Chisholm R.L."/>
            <person name="Gibbs R.A."/>
            <person name="Loomis W.F."/>
            <person name="Platzer M."/>
            <person name="Kay R.R."/>
            <person name="Williams J.G."/>
            <person name="Dear P.H."/>
            <person name="Noegel A.A."/>
            <person name="Barrell B.G."/>
            <person name="Kuspa A."/>
        </authorList>
    </citation>
    <scope>NUCLEOTIDE SEQUENCE [LARGE SCALE GENOMIC DNA]</scope>
    <source>
        <strain>AX4</strain>
    </source>
</reference>
<reference key="2">
    <citation type="journal article" date="2002" name="Eukaryot. Cell">
        <title>Evolutionary analyses of ABC transporters of Dictyostelium discoideum.</title>
        <authorList>
            <person name="Anjard C."/>
            <person name="Loomis W.F."/>
        </authorList>
    </citation>
    <scope>NUCLEOTIDE SEQUENCE [GENOMIC DNA] OF 6-1328</scope>
    <scope>NOMENCLATURE</scope>
    <source>
        <strain>AX4</strain>
    </source>
</reference>
<name>ABCC7_DICDI</name>
<gene>
    <name type="primary">abcC7</name>
    <name type="ORF">DDB_G0291243</name>
</gene>